<keyword id="KW-0963">Cytoplasm</keyword>
<keyword id="KW-0255">Endonuclease</keyword>
<keyword id="KW-0378">Hydrolase</keyword>
<keyword id="KW-0460">Magnesium</keyword>
<keyword id="KW-0479">Metal-binding</keyword>
<keyword id="KW-0540">Nuclease</keyword>
<keyword id="KW-0690">Ribosome biogenesis</keyword>
<keyword id="KW-0694">RNA-binding</keyword>
<keyword id="KW-0698">rRNA processing</keyword>
<keyword id="KW-0699">rRNA-binding</keyword>
<proteinExistence type="inferred from homology"/>
<accession>P43041</accession>
<accession>Q2STB0</accession>
<name>RNM5_MYCCT</name>
<feature type="chain" id="PRO_0000210403" description="Ribonuclease M5">
    <location>
        <begin position="1"/>
        <end position="180"/>
    </location>
</feature>
<feature type="domain" description="Toprim" evidence="1">
    <location>
        <begin position="5"/>
        <end position="90"/>
    </location>
</feature>
<feature type="binding site" evidence="1">
    <location>
        <position position="11"/>
    </location>
    <ligand>
        <name>Mg(2+)</name>
        <dbReference type="ChEBI" id="CHEBI:18420"/>
        <label>1</label>
        <note>catalytic</note>
    </ligand>
</feature>
<feature type="binding site" evidence="1">
    <location>
        <position position="59"/>
    </location>
    <ligand>
        <name>Mg(2+)</name>
        <dbReference type="ChEBI" id="CHEBI:18420"/>
        <label>1</label>
        <note>catalytic</note>
    </ligand>
</feature>
<feature type="binding site" evidence="1">
    <location>
        <position position="59"/>
    </location>
    <ligand>
        <name>Mg(2+)</name>
        <dbReference type="ChEBI" id="CHEBI:18420"/>
        <label>2</label>
    </ligand>
</feature>
<feature type="binding site" evidence="1">
    <location>
        <position position="61"/>
    </location>
    <ligand>
        <name>Mg(2+)</name>
        <dbReference type="ChEBI" id="CHEBI:18420"/>
        <label>2</label>
    </ligand>
</feature>
<gene>
    <name evidence="1" type="primary">rnmV</name>
    <name type="ordered locus">MCAP_0003</name>
</gene>
<reference key="1">
    <citation type="journal article" date="1993" name="Nucleic Acids Res.">
        <title>Mapping of replication initiation site in Mycoplasma capricolum genome by two-dimensional gel-electrophoretic analysis.</title>
        <authorList>
            <person name="Miyata M."/>
            <person name="Sano K."/>
            <person name="Okada R."/>
            <person name="Fukumura T."/>
        </authorList>
    </citation>
    <scope>NUCLEOTIDE SEQUENCE [GENOMIC DNA]</scope>
</reference>
<reference key="2">
    <citation type="submission" date="2005-09" db="EMBL/GenBank/DDBJ databases">
        <authorList>
            <person name="Glass J.I."/>
            <person name="Lartigue C."/>
            <person name="Pfannkoch C."/>
            <person name="Baden-Tillson H."/>
            <person name="Smith H.O."/>
            <person name="Venter J.C."/>
            <person name="Roske K."/>
            <person name="Wise K.S."/>
            <person name="Calcutt M.J."/>
            <person name="Nelson W.C."/>
            <person name="Nierman W.C."/>
        </authorList>
    </citation>
    <scope>NUCLEOTIDE SEQUENCE [LARGE SCALE GENOMIC DNA]</scope>
    <source>
        <strain>California kid / ATCC 27343 / NCTC 10154</strain>
    </source>
</reference>
<dbReference type="EC" id="3.1.26.8" evidence="1"/>
<dbReference type="EMBL" id="D14983">
    <property type="protein sequence ID" value="BAA03627.1"/>
    <property type="molecule type" value="Genomic_DNA"/>
</dbReference>
<dbReference type="EMBL" id="CP000123">
    <property type="protein sequence ID" value="ABC01791.1"/>
    <property type="molecule type" value="Genomic_DNA"/>
</dbReference>
<dbReference type="PIR" id="S42118">
    <property type="entry name" value="S42118"/>
</dbReference>
<dbReference type="RefSeq" id="WP_011386908.1">
    <property type="nucleotide sequence ID" value="NC_007633.1"/>
</dbReference>
<dbReference type="SMR" id="P43041"/>
<dbReference type="GeneID" id="23779040"/>
<dbReference type="KEGG" id="mcp:MCAP_0003"/>
<dbReference type="HOGENOM" id="CLU_109405_1_0_14"/>
<dbReference type="PhylomeDB" id="P43041"/>
<dbReference type="Proteomes" id="UP000001928">
    <property type="component" value="Chromosome"/>
</dbReference>
<dbReference type="GO" id="GO:0005737">
    <property type="term" value="C:cytoplasm"/>
    <property type="evidence" value="ECO:0007669"/>
    <property type="project" value="UniProtKB-SubCell"/>
</dbReference>
<dbReference type="GO" id="GO:0046872">
    <property type="term" value="F:metal ion binding"/>
    <property type="evidence" value="ECO:0007669"/>
    <property type="project" value="UniProtKB-KW"/>
</dbReference>
<dbReference type="GO" id="GO:0043822">
    <property type="term" value="F:ribonuclease M5 activity"/>
    <property type="evidence" value="ECO:0007669"/>
    <property type="project" value="UniProtKB-UniRule"/>
</dbReference>
<dbReference type="GO" id="GO:0019843">
    <property type="term" value="F:rRNA binding"/>
    <property type="evidence" value="ECO:0007669"/>
    <property type="project" value="UniProtKB-KW"/>
</dbReference>
<dbReference type="GO" id="GO:0006364">
    <property type="term" value="P:rRNA processing"/>
    <property type="evidence" value="ECO:0007669"/>
    <property type="project" value="UniProtKB-UniRule"/>
</dbReference>
<dbReference type="CDD" id="cd01027">
    <property type="entry name" value="TOPRIM_RNase_M5_like"/>
    <property type="match status" value="1"/>
</dbReference>
<dbReference type="Gene3D" id="3.40.1360.10">
    <property type="match status" value="1"/>
</dbReference>
<dbReference type="HAMAP" id="MF_01469">
    <property type="entry name" value="RNase_M5"/>
    <property type="match status" value="1"/>
</dbReference>
<dbReference type="InterPro" id="IPR004466">
    <property type="entry name" value="RNase_M5"/>
</dbReference>
<dbReference type="InterPro" id="IPR025156">
    <property type="entry name" value="RNase_M5_C"/>
</dbReference>
<dbReference type="InterPro" id="IPR006171">
    <property type="entry name" value="TOPRIM_dom"/>
</dbReference>
<dbReference type="InterPro" id="IPR034141">
    <property type="entry name" value="TOPRIM_RNase_M5-like"/>
</dbReference>
<dbReference type="NCBIfam" id="TIGR00334">
    <property type="entry name" value="5S_RNA_mat_M5"/>
    <property type="match status" value="1"/>
</dbReference>
<dbReference type="PANTHER" id="PTHR39156">
    <property type="entry name" value="RIBONUCLEASE M5"/>
    <property type="match status" value="1"/>
</dbReference>
<dbReference type="PANTHER" id="PTHR39156:SF1">
    <property type="entry name" value="RIBONUCLEASE M5"/>
    <property type="match status" value="1"/>
</dbReference>
<dbReference type="Pfam" id="PF13331">
    <property type="entry name" value="DUF4093"/>
    <property type="match status" value="1"/>
</dbReference>
<dbReference type="Pfam" id="PF01751">
    <property type="entry name" value="Toprim"/>
    <property type="match status" value="1"/>
</dbReference>
<dbReference type="SMART" id="SM00493">
    <property type="entry name" value="TOPRIM"/>
    <property type="match status" value="1"/>
</dbReference>
<dbReference type="SUPFAM" id="SSF110455">
    <property type="entry name" value="Toprim domain"/>
    <property type="match status" value="1"/>
</dbReference>
<dbReference type="PROSITE" id="PS50880">
    <property type="entry name" value="TOPRIM"/>
    <property type="match status" value="1"/>
</dbReference>
<organism>
    <name type="scientific">Mycoplasma capricolum subsp. capricolum (strain California kid / ATCC 27343 / NCTC 10154)</name>
    <dbReference type="NCBI Taxonomy" id="340047"/>
    <lineage>
        <taxon>Bacteria</taxon>
        <taxon>Bacillati</taxon>
        <taxon>Mycoplasmatota</taxon>
        <taxon>Mollicutes</taxon>
        <taxon>Mycoplasmataceae</taxon>
        <taxon>Mycoplasma</taxon>
    </lineage>
</organism>
<protein>
    <recommendedName>
        <fullName evidence="1">Ribonuclease M5</fullName>
        <ecNumber evidence="1">3.1.26.8</ecNumber>
    </recommendedName>
    <alternativeName>
        <fullName>ORF L3</fullName>
    </alternativeName>
    <alternativeName>
        <fullName evidence="1">RNase M5</fullName>
    </alternativeName>
    <alternativeName>
        <fullName evidence="1">Ribosomal RNA terminal maturase M5</fullName>
    </alternativeName>
</protein>
<comment type="function">
    <text evidence="1">Required for correct processing of both the 5' and 3' ends of 5S rRNA precursor. Cleaves both sides of a double-stranded region yielding mature 5S rRNA in one step.</text>
</comment>
<comment type="catalytic activity">
    <reaction evidence="1">
        <text>Endonucleolytic cleavage of RNA, removing 21 and 42 nucleotides, respectively, from the 5'- and 3'-termini of a 5S-rRNA precursor.</text>
        <dbReference type="EC" id="3.1.26.8"/>
    </reaction>
</comment>
<comment type="cofactor">
    <cofactor evidence="1">
        <name>Mg(2+)</name>
        <dbReference type="ChEBI" id="CHEBI:18420"/>
    </cofactor>
    <text evidence="1">Binds two Mg(2+) per subunit.</text>
</comment>
<comment type="subcellular location">
    <subcellularLocation>
        <location evidence="1">Cytoplasm</location>
    </subcellularLocation>
</comment>
<comment type="similarity">
    <text evidence="1">Belongs to the ribonuclease M5 family.</text>
</comment>
<evidence type="ECO:0000255" key="1">
    <source>
        <dbReference type="HAMAP-Rule" id="MF_01469"/>
    </source>
</evidence>
<sequence length="180" mass="20703">MSKIKQIIIVEGKTDSDKLKRIYGNDLKTIQTKGLSINKKTLEMIKEFNNKTGVIIFTDPDGAGKKIRQTIIDYLDNKVLNAFIKKDDISKTSKKVGIAEASDDAIKKALDNLIIYDKNNVSLSWTDYINNNFYLKSNRIVICKYFNFDNNISSKTLFKWLNWMNVSIDDIKKIIGEYES</sequence>